<dbReference type="EC" id="2.1.1.166" evidence="1"/>
<dbReference type="EMBL" id="CP000094">
    <property type="protein sequence ID" value="ABA72514.1"/>
    <property type="molecule type" value="Genomic_DNA"/>
</dbReference>
<dbReference type="RefSeq" id="WP_011332402.1">
    <property type="nucleotide sequence ID" value="NC_007492.2"/>
</dbReference>
<dbReference type="SMR" id="Q3KI92"/>
<dbReference type="KEGG" id="pfo:Pfl01_0771"/>
<dbReference type="eggNOG" id="COG0293">
    <property type="taxonomic scope" value="Bacteria"/>
</dbReference>
<dbReference type="HOGENOM" id="CLU_009422_4_0_6"/>
<dbReference type="Proteomes" id="UP000002704">
    <property type="component" value="Chromosome"/>
</dbReference>
<dbReference type="GO" id="GO:0005737">
    <property type="term" value="C:cytoplasm"/>
    <property type="evidence" value="ECO:0007669"/>
    <property type="project" value="UniProtKB-SubCell"/>
</dbReference>
<dbReference type="GO" id="GO:0008650">
    <property type="term" value="F:rRNA (uridine-2'-O-)-methyltransferase activity"/>
    <property type="evidence" value="ECO:0007669"/>
    <property type="project" value="UniProtKB-UniRule"/>
</dbReference>
<dbReference type="FunFam" id="3.40.50.150:FF:000005">
    <property type="entry name" value="Ribosomal RNA large subunit methyltransferase E"/>
    <property type="match status" value="1"/>
</dbReference>
<dbReference type="Gene3D" id="3.40.50.150">
    <property type="entry name" value="Vaccinia Virus protein VP39"/>
    <property type="match status" value="1"/>
</dbReference>
<dbReference type="HAMAP" id="MF_01547">
    <property type="entry name" value="RNA_methyltr_E"/>
    <property type="match status" value="1"/>
</dbReference>
<dbReference type="InterPro" id="IPR050082">
    <property type="entry name" value="RNA_methyltr_RlmE"/>
</dbReference>
<dbReference type="InterPro" id="IPR002877">
    <property type="entry name" value="RNA_MeTrfase_FtsJ_dom"/>
</dbReference>
<dbReference type="InterPro" id="IPR015507">
    <property type="entry name" value="rRNA-MeTfrase_E"/>
</dbReference>
<dbReference type="InterPro" id="IPR029063">
    <property type="entry name" value="SAM-dependent_MTases_sf"/>
</dbReference>
<dbReference type="NCBIfam" id="NF008390">
    <property type="entry name" value="PRK11188.1"/>
    <property type="match status" value="1"/>
</dbReference>
<dbReference type="PANTHER" id="PTHR10920">
    <property type="entry name" value="RIBOSOMAL RNA METHYLTRANSFERASE"/>
    <property type="match status" value="1"/>
</dbReference>
<dbReference type="PANTHER" id="PTHR10920:SF18">
    <property type="entry name" value="RRNA METHYLTRANSFERASE 2, MITOCHONDRIAL"/>
    <property type="match status" value="1"/>
</dbReference>
<dbReference type="Pfam" id="PF01728">
    <property type="entry name" value="FtsJ"/>
    <property type="match status" value="1"/>
</dbReference>
<dbReference type="PIRSF" id="PIRSF005461">
    <property type="entry name" value="23S_rRNA_mtase"/>
    <property type="match status" value="1"/>
</dbReference>
<dbReference type="SUPFAM" id="SSF53335">
    <property type="entry name" value="S-adenosyl-L-methionine-dependent methyltransferases"/>
    <property type="match status" value="1"/>
</dbReference>
<name>RLME_PSEPF</name>
<evidence type="ECO:0000255" key="1">
    <source>
        <dbReference type="HAMAP-Rule" id="MF_01547"/>
    </source>
</evidence>
<feature type="chain" id="PRO_0000282777" description="Ribosomal RNA large subunit methyltransferase E">
    <location>
        <begin position="1"/>
        <end position="209"/>
    </location>
</feature>
<feature type="active site" description="Proton acceptor" evidence="1">
    <location>
        <position position="161"/>
    </location>
</feature>
<feature type="binding site" evidence="1">
    <location>
        <position position="60"/>
    </location>
    <ligand>
        <name>S-adenosyl-L-methionine</name>
        <dbReference type="ChEBI" id="CHEBI:59789"/>
    </ligand>
</feature>
<feature type="binding site" evidence="1">
    <location>
        <position position="62"/>
    </location>
    <ligand>
        <name>S-adenosyl-L-methionine</name>
        <dbReference type="ChEBI" id="CHEBI:59789"/>
    </ligand>
</feature>
<feature type="binding site" evidence="1">
    <location>
        <position position="80"/>
    </location>
    <ligand>
        <name>S-adenosyl-L-methionine</name>
        <dbReference type="ChEBI" id="CHEBI:59789"/>
    </ligand>
</feature>
<feature type="binding site" evidence="1">
    <location>
        <position position="96"/>
    </location>
    <ligand>
        <name>S-adenosyl-L-methionine</name>
        <dbReference type="ChEBI" id="CHEBI:59789"/>
    </ligand>
</feature>
<feature type="binding site" evidence="1">
    <location>
        <position position="121"/>
    </location>
    <ligand>
        <name>S-adenosyl-L-methionine</name>
        <dbReference type="ChEBI" id="CHEBI:59789"/>
    </ligand>
</feature>
<organism>
    <name type="scientific">Pseudomonas fluorescens (strain Pf0-1)</name>
    <dbReference type="NCBI Taxonomy" id="205922"/>
    <lineage>
        <taxon>Bacteria</taxon>
        <taxon>Pseudomonadati</taxon>
        <taxon>Pseudomonadota</taxon>
        <taxon>Gammaproteobacteria</taxon>
        <taxon>Pseudomonadales</taxon>
        <taxon>Pseudomonadaceae</taxon>
        <taxon>Pseudomonas</taxon>
    </lineage>
</organism>
<keyword id="KW-0963">Cytoplasm</keyword>
<keyword id="KW-0489">Methyltransferase</keyword>
<keyword id="KW-0698">rRNA processing</keyword>
<keyword id="KW-0949">S-adenosyl-L-methionine</keyword>
<keyword id="KW-0808">Transferase</keyword>
<comment type="function">
    <text evidence="1">Specifically methylates the uridine in position 2552 of 23S rRNA at the 2'-O position of the ribose in the fully assembled 50S ribosomal subunit.</text>
</comment>
<comment type="catalytic activity">
    <reaction evidence="1">
        <text>uridine(2552) in 23S rRNA + S-adenosyl-L-methionine = 2'-O-methyluridine(2552) in 23S rRNA + S-adenosyl-L-homocysteine + H(+)</text>
        <dbReference type="Rhea" id="RHEA:42720"/>
        <dbReference type="Rhea" id="RHEA-COMP:10202"/>
        <dbReference type="Rhea" id="RHEA-COMP:10203"/>
        <dbReference type="ChEBI" id="CHEBI:15378"/>
        <dbReference type="ChEBI" id="CHEBI:57856"/>
        <dbReference type="ChEBI" id="CHEBI:59789"/>
        <dbReference type="ChEBI" id="CHEBI:65315"/>
        <dbReference type="ChEBI" id="CHEBI:74478"/>
        <dbReference type="EC" id="2.1.1.166"/>
    </reaction>
</comment>
<comment type="subcellular location">
    <subcellularLocation>
        <location evidence="1">Cytoplasm</location>
    </subcellularLocation>
</comment>
<comment type="similarity">
    <text evidence="1">Belongs to the class I-like SAM-binding methyltransferase superfamily. RNA methyltransferase RlmE family.</text>
</comment>
<accession>Q3KI92</accession>
<sequence>MARSKTSLGWLKRHVNDPYVKQAQKDGYRSRASYKLLEIQEKYKLIRPGMNVVDLGAAPGGWSQVTSRLIGGQGRLIASDILEMDSIPDVTFIQGDFTEDAVLAQILEAVGNSQVDLVISDMAPNMSGTPEVDMPKAMFLCELALDLAERILKPGGNFVIKIFQGEGFDTYLKDARKKFDKIQMIKPDSSRGSSREQYMLAWGYRGRSE</sequence>
<gene>
    <name evidence="1" type="primary">rlmE</name>
    <name evidence="1" type="synonym">ftsJ</name>
    <name evidence="1" type="synonym">rrmJ</name>
    <name type="ordered locus">Pfl01_0771</name>
</gene>
<reference key="1">
    <citation type="journal article" date="2009" name="Genome Biol.">
        <title>Genomic and genetic analyses of diversity and plant interactions of Pseudomonas fluorescens.</title>
        <authorList>
            <person name="Silby M.W."/>
            <person name="Cerdeno-Tarraga A.M."/>
            <person name="Vernikos G.S."/>
            <person name="Giddens S.R."/>
            <person name="Jackson R.W."/>
            <person name="Preston G.M."/>
            <person name="Zhang X.-X."/>
            <person name="Moon C.D."/>
            <person name="Gehrig S.M."/>
            <person name="Godfrey S.A.C."/>
            <person name="Knight C.G."/>
            <person name="Malone J.G."/>
            <person name="Robinson Z."/>
            <person name="Spiers A.J."/>
            <person name="Harris S."/>
            <person name="Challis G.L."/>
            <person name="Yaxley A.M."/>
            <person name="Harris D."/>
            <person name="Seeger K."/>
            <person name="Murphy L."/>
            <person name="Rutter S."/>
            <person name="Squares R."/>
            <person name="Quail M.A."/>
            <person name="Saunders E."/>
            <person name="Mavromatis K."/>
            <person name="Brettin T.S."/>
            <person name="Bentley S.D."/>
            <person name="Hothersall J."/>
            <person name="Stephens E."/>
            <person name="Thomas C.M."/>
            <person name="Parkhill J."/>
            <person name="Levy S.B."/>
            <person name="Rainey P.B."/>
            <person name="Thomson N.R."/>
        </authorList>
    </citation>
    <scope>NUCLEOTIDE SEQUENCE [LARGE SCALE GENOMIC DNA]</scope>
    <source>
        <strain>Pf0-1</strain>
    </source>
</reference>
<proteinExistence type="inferred from homology"/>
<protein>
    <recommendedName>
        <fullName evidence="1">Ribosomal RNA large subunit methyltransferase E</fullName>
        <ecNumber evidence="1">2.1.1.166</ecNumber>
    </recommendedName>
    <alternativeName>
        <fullName evidence="1">23S rRNA Um2552 methyltransferase</fullName>
    </alternativeName>
    <alternativeName>
        <fullName evidence="1">rRNA (uridine-2'-O-)-methyltransferase</fullName>
    </alternativeName>
</protein>